<organism>
    <name type="scientific">Brucella abortus biovar 1 (strain 9-941)</name>
    <dbReference type="NCBI Taxonomy" id="262698"/>
    <lineage>
        <taxon>Bacteria</taxon>
        <taxon>Pseudomonadati</taxon>
        <taxon>Pseudomonadota</taxon>
        <taxon>Alphaproteobacteria</taxon>
        <taxon>Hyphomicrobiales</taxon>
        <taxon>Brucellaceae</taxon>
        <taxon>Brucella/Ochrobactrum group</taxon>
        <taxon>Brucella</taxon>
    </lineage>
</organism>
<feature type="signal peptide" evidence="1">
    <location>
        <begin position="1"/>
        <end position="29"/>
    </location>
</feature>
<feature type="chain" id="PRO_0000283784" description="Putative binding protein BruAb2_0648">
    <location>
        <begin position="30"/>
        <end position="615"/>
    </location>
</feature>
<accession>Q577X5</accession>
<dbReference type="EMBL" id="AE017224">
    <property type="protein sequence ID" value="AAX76059.1"/>
    <property type="molecule type" value="Genomic_DNA"/>
</dbReference>
<dbReference type="RefSeq" id="WP_002967300.1">
    <property type="nucleotide sequence ID" value="NC_006933.1"/>
</dbReference>
<dbReference type="SMR" id="Q577X5"/>
<dbReference type="EnsemblBacteria" id="AAX76059">
    <property type="protein sequence ID" value="AAX76059"/>
    <property type="gene ID" value="BruAb2_0648"/>
</dbReference>
<dbReference type="KEGG" id="bmb:BruAb2_0648"/>
<dbReference type="HOGENOM" id="CLU_023171_0_0_5"/>
<dbReference type="Proteomes" id="UP000000540">
    <property type="component" value="Chromosome II"/>
</dbReference>
<dbReference type="GO" id="GO:0043190">
    <property type="term" value="C:ATP-binding cassette (ABC) transporter complex"/>
    <property type="evidence" value="ECO:0007669"/>
    <property type="project" value="InterPro"/>
</dbReference>
<dbReference type="GO" id="GO:0030288">
    <property type="term" value="C:outer membrane-bounded periplasmic space"/>
    <property type="evidence" value="ECO:0007669"/>
    <property type="project" value="TreeGrafter"/>
</dbReference>
<dbReference type="GO" id="GO:1904680">
    <property type="term" value="F:peptide transmembrane transporter activity"/>
    <property type="evidence" value="ECO:0007669"/>
    <property type="project" value="TreeGrafter"/>
</dbReference>
<dbReference type="GO" id="GO:0042884">
    <property type="term" value="P:microcin transport"/>
    <property type="evidence" value="ECO:0007669"/>
    <property type="project" value="TreeGrafter"/>
</dbReference>
<dbReference type="GO" id="GO:0015833">
    <property type="term" value="P:peptide transport"/>
    <property type="evidence" value="ECO:0007669"/>
    <property type="project" value="TreeGrafter"/>
</dbReference>
<dbReference type="CDD" id="cd08497">
    <property type="entry name" value="MbnE-like"/>
    <property type="match status" value="1"/>
</dbReference>
<dbReference type="Gene3D" id="3.10.105.10">
    <property type="entry name" value="Dipeptide-binding Protein, Domain 3"/>
    <property type="match status" value="1"/>
</dbReference>
<dbReference type="Gene3D" id="3.40.190.10">
    <property type="entry name" value="Periplasmic binding protein-like II"/>
    <property type="match status" value="1"/>
</dbReference>
<dbReference type="InterPro" id="IPR030678">
    <property type="entry name" value="Peptide/Ni-bd"/>
</dbReference>
<dbReference type="InterPro" id="IPR039424">
    <property type="entry name" value="SBP_5"/>
</dbReference>
<dbReference type="InterPro" id="IPR000914">
    <property type="entry name" value="SBP_5_dom"/>
</dbReference>
<dbReference type="PANTHER" id="PTHR30290:SF64">
    <property type="entry name" value="ABC TRANSPORTER PERIPLASMIC BINDING PROTEIN"/>
    <property type="match status" value="1"/>
</dbReference>
<dbReference type="PANTHER" id="PTHR30290">
    <property type="entry name" value="PERIPLASMIC BINDING COMPONENT OF ABC TRANSPORTER"/>
    <property type="match status" value="1"/>
</dbReference>
<dbReference type="Pfam" id="PF00496">
    <property type="entry name" value="SBP_bac_5"/>
    <property type="match status" value="1"/>
</dbReference>
<dbReference type="PIRSF" id="PIRSF002741">
    <property type="entry name" value="MppA"/>
    <property type="match status" value="1"/>
</dbReference>
<dbReference type="SUPFAM" id="SSF53850">
    <property type="entry name" value="Periplasmic binding protein-like II"/>
    <property type="match status" value="1"/>
</dbReference>
<keyword id="KW-0574">Periplasm</keyword>
<keyword id="KW-0732">Signal</keyword>
<keyword id="KW-0813">Transport</keyword>
<comment type="subcellular location">
    <subcellularLocation>
        <location evidence="2">Periplasm</location>
    </subcellularLocation>
</comment>
<comment type="similarity">
    <text evidence="2">Belongs to the bacterial solute-binding protein 5 family.</text>
</comment>
<reference key="1">
    <citation type="journal article" date="2005" name="J. Bacteriol.">
        <title>Completion of the genome sequence of Brucella abortus and comparison to the highly similar genomes of Brucella melitensis and Brucella suis.</title>
        <authorList>
            <person name="Halling S.M."/>
            <person name="Peterson-Burch B.D."/>
            <person name="Bricker B.J."/>
            <person name="Zuerner R.L."/>
            <person name="Qing Z."/>
            <person name="Li L.-L."/>
            <person name="Kapur V."/>
            <person name="Alt D.P."/>
            <person name="Olsen S.C."/>
        </authorList>
    </citation>
    <scope>NUCLEOTIDE SEQUENCE [LARGE SCALE GENOMIC DNA]</scope>
    <source>
        <strain>9-941</strain>
    </source>
</reference>
<gene>
    <name type="ordered locus">BruAb2_0648</name>
</gene>
<evidence type="ECO:0000255" key="1"/>
<evidence type="ECO:0000305" key="2"/>
<proteinExistence type="inferred from homology"/>
<name>Y2948_BRUAB</name>
<sequence>MLNRFIAFFRSVFLIGLVATAFGALPARAANETAPDYALSMHGDVALPADYTHFPYTNPDAPKKGSLTVGVVGTFDSLNPFVLKSMRTTARGLYNDGEFGNMVYQTLMLRSRDEPFTLYSLLAEKVAIDPERKWVEFTLNPKAKWSDGQPVTVDDVLFTYDILTEKGRPPYNSRMSRVAKIEKTGERSVRFTFNEKSDREFPMLIAGSMPVLPKHAINRDTFGNSTLEPPIGSGPYVVASVQPGQRIVYKRNPDYWGKDLPSQRGFNNFDKISIEYYRNETSLFESFKKGILDIFIEGNPIRWEKLYDFPAVEQGKVIKDTFEKGTPADMLGFVFNTRRPIFADRRVRQALGLLFDFEWANSNLFAGQYRRTQSFWEGAQLSSVGRPADARERELLAPFPGAVREDVMNGTWHPPVTDGSGHDRVPAKKAYDLLSQAGFQFKDGMAIDPTGKPFAFEIMTRSPDEEKIALAYQRNLSRLGIAVEIHTVDDAQYQQRLQTFDYDMILGALASSLSPGNEQWLRWGSASRDVQGSFNFAGVADPAVDAMIEALLAARNRADFVSAVRALDRVLISGDYYVPLYHLPYQWVARWDRIEHPQKTPLSGYQLPAWWHTSQ</sequence>
<protein>
    <recommendedName>
        <fullName>Putative binding protein BruAb2_0648</fullName>
    </recommendedName>
</protein>